<protein>
    <recommendedName>
        <fullName evidence="1">Nucleoside diphosphate kinase</fullName>
        <shortName evidence="1">NDK</shortName>
        <shortName evidence="1">NDP kinase</shortName>
        <ecNumber evidence="1">2.7.4.6</ecNumber>
    </recommendedName>
    <alternativeName>
        <fullName evidence="1">Nucleoside-2-P kinase</fullName>
    </alternativeName>
</protein>
<accession>Q6HL40</accession>
<gene>
    <name evidence="1" type="primary">ndk</name>
    <name type="ordered locus">BT9727_1397</name>
</gene>
<feature type="chain" id="PRO_0000136943" description="Nucleoside diphosphate kinase">
    <location>
        <begin position="1"/>
        <end position="148"/>
    </location>
</feature>
<feature type="active site" description="Pros-phosphohistidine intermediate" evidence="1">
    <location>
        <position position="115"/>
    </location>
</feature>
<feature type="binding site" evidence="1">
    <location>
        <position position="9"/>
    </location>
    <ligand>
        <name>ATP</name>
        <dbReference type="ChEBI" id="CHEBI:30616"/>
    </ligand>
</feature>
<feature type="binding site" evidence="1">
    <location>
        <position position="57"/>
    </location>
    <ligand>
        <name>ATP</name>
        <dbReference type="ChEBI" id="CHEBI:30616"/>
    </ligand>
</feature>
<feature type="binding site" evidence="1">
    <location>
        <position position="85"/>
    </location>
    <ligand>
        <name>ATP</name>
        <dbReference type="ChEBI" id="CHEBI:30616"/>
    </ligand>
</feature>
<feature type="binding site" evidence="1">
    <location>
        <position position="91"/>
    </location>
    <ligand>
        <name>ATP</name>
        <dbReference type="ChEBI" id="CHEBI:30616"/>
    </ligand>
</feature>
<feature type="binding site" evidence="1">
    <location>
        <position position="102"/>
    </location>
    <ligand>
        <name>ATP</name>
        <dbReference type="ChEBI" id="CHEBI:30616"/>
    </ligand>
</feature>
<feature type="binding site" evidence="1">
    <location>
        <position position="112"/>
    </location>
    <ligand>
        <name>ATP</name>
        <dbReference type="ChEBI" id="CHEBI:30616"/>
    </ligand>
</feature>
<feature type="modified residue" description="Phosphothreonine" evidence="1">
    <location>
        <position position="91"/>
    </location>
</feature>
<feature type="modified residue" description="Phosphoserine" evidence="1">
    <location>
        <position position="122"/>
    </location>
</feature>
<dbReference type="EC" id="2.7.4.6" evidence="1"/>
<dbReference type="EMBL" id="AE017355">
    <property type="protein sequence ID" value="AAT59457.1"/>
    <property type="molecule type" value="Genomic_DNA"/>
</dbReference>
<dbReference type="RefSeq" id="WP_000415887.1">
    <property type="nucleotide sequence ID" value="NC_005957.1"/>
</dbReference>
<dbReference type="RefSeq" id="YP_035731.1">
    <property type="nucleotide sequence ID" value="NC_005957.1"/>
</dbReference>
<dbReference type="SMR" id="Q6HL40"/>
<dbReference type="GeneID" id="75084826"/>
<dbReference type="KEGG" id="btk:BT9727_1397"/>
<dbReference type="PATRIC" id="fig|281309.8.peg.1469"/>
<dbReference type="HOGENOM" id="CLU_060216_6_3_9"/>
<dbReference type="Proteomes" id="UP000001301">
    <property type="component" value="Chromosome"/>
</dbReference>
<dbReference type="GO" id="GO:0005737">
    <property type="term" value="C:cytoplasm"/>
    <property type="evidence" value="ECO:0007669"/>
    <property type="project" value="UniProtKB-SubCell"/>
</dbReference>
<dbReference type="GO" id="GO:0005524">
    <property type="term" value="F:ATP binding"/>
    <property type="evidence" value="ECO:0007669"/>
    <property type="project" value="UniProtKB-UniRule"/>
</dbReference>
<dbReference type="GO" id="GO:0046872">
    <property type="term" value="F:metal ion binding"/>
    <property type="evidence" value="ECO:0007669"/>
    <property type="project" value="UniProtKB-KW"/>
</dbReference>
<dbReference type="GO" id="GO:0004550">
    <property type="term" value="F:nucleoside diphosphate kinase activity"/>
    <property type="evidence" value="ECO:0007669"/>
    <property type="project" value="UniProtKB-UniRule"/>
</dbReference>
<dbReference type="GO" id="GO:0006241">
    <property type="term" value="P:CTP biosynthetic process"/>
    <property type="evidence" value="ECO:0007669"/>
    <property type="project" value="UniProtKB-UniRule"/>
</dbReference>
<dbReference type="GO" id="GO:0006183">
    <property type="term" value="P:GTP biosynthetic process"/>
    <property type="evidence" value="ECO:0007669"/>
    <property type="project" value="UniProtKB-UniRule"/>
</dbReference>
<dbReference type="GO" id="GO:0006228">
    <property type="term" value="P:UTP biosynthetic process"/>
    <property type="evidence" value="ECO:0007669"/>
    <property type="project" value="UniProtKB-UniRule"/>
</dbReference>
<dbReference type="CDD" id="cd04413">
    <property type="entry name" value="NDPk_I"/>
    <property type="match status" value="1"/>
</dbReference>
<dbReference type="FunFam" id="3.30.70.141:FF:000002">
    <property type="entry name" value="Nucleoside diphosphate kinase"/>
    <property type="match status" value="1"/>
</dbReference>
<dbReference type="Gene3D" id="3.30.70.141">
    <property type="entry name" value="Nucleoside diphosphate kinase-like domain"/>
    <property type="match status" value="1"/>
</dbReference>
<dbReference type="HAMAP" id="MF_00451">
    <property type="entry name" value="NDP_kinase"/>
    <property type="match status" value="1"/>
</dbReference>
<dbReference type="InterPro" id="IPR034907">
    <property type="entry name" value="NDK-like_dom"/>
</dbReference>
<dbReference type="InterPro" id="IPR036850">
    <property type="entry name" value="NDK-like_dom_sf"/>
</dbReference>
<dbReference type="InterPro" id="IPR001564">
    <property type="entry name" value="Nucleoside_diP_kinase"/>
</dbReference>
<dbReference type="InterPro" id="IPR023005">
    <property type="entry name" value="Nucleoside_diP_kinase_AS"/>
</dbReference>
<dbReference type="NCBIfam" id="NF001908">
    <property type="entry name" value="PRK00668.1"/>
    <property type="match status" value="1"/>
</dbReference>
<dbReference type="PANTHER" id="PTHR11349">
    <property type="entry name" value="NUCLEOSIDE DIPHOSPHATE KINASE"/>
    <property type="match status" value="1"/>
</dbReference>
<dbReference type="Pfam" id="PF00334">
    <property type="entry name" value="NDK"/>
    <property type="match status" value="1"/>
</dbReference>
<dbReference type="PRINTS" id="PR01243">
    <property type="entry name" value="NUCDPKINASE"/>
</dbReference>
<dbReference type="SMART" id="SM00562">
    <property type="entry name" value="NDK"/>
    <property type="match status" value="1"/>
</dbReference>
<dbReference type="SUPFAM" id="SSF54919">
    <property type="entry name" value="Nucleoside diphosphate kinase, NDK"/>
    <property type="match status" value="1"/>
</dbReference>
<dbReference type="PROSITE" id="PS00469">
    <property type="entry name" value="NDPK"/>
    <property type="match status" value="1"/>
</dbReference>
<dbReference type="PROSITE" id="PS51374">
    <property type="entry name" value="NDPK_LIKE"/>
    <property type="match status" value="1"/>
</dbReference>
<comment type="function">
    <text evidence="1">Major role in the synthesis of nucleoside triphosphates other than ATP. The ATP gamma phosphate is transferred to the NDP beta phosphate via a ping-pong mechanism, using a phosphorylated active-site intermediate.</text>
</comment>
<comment type="catalytic activity">
    <reaction evidence="1">
        <text>a 2'-deoxyribonucleoside 5'-diphosphate + ATP = a 2'-deoxyribonucleoside 5'-triphosphate + ADP</text>
        <dbReference type="Rhea" id="RHEA:44640"/>
        <dbReference type="ChEBI" id="CHEBI:30616"/>
        <dbReference type="ChEBI" id="CHEBI:61560"/>
        <dbReference type="ChEBI" id="CHEBI:73316"/>
        <dbReference type="ChEBI" id="CHEBI:456216"/>
        <dbReference type="EC" id="2.7.4.6"/>
    </reaction>
</comment>
<comment type="catalytic activity">
    <reaction evidence="1">
        <text>a ribonucleoside 5'-diphosphate + ATP = a ribonucleoside 5'-triphosphate + ADP</text>
        <dbReference type="Rhea" id="RHEA:18113"/>
        <dbReference type="ChEBI" id="CHEBI:30616"/>
        <dbReference type="ChEBI" id="CHEBI:57930"/>
        <dbReference type="ChEBI" id="CHEBI:61557"/>
        <dbReference type="ChEBI" id="CHEBI:456216"/>
        <dbReference type="EC" id="2.7.4.6"/>
    </reaction>
</comment>
<comment type="cofactor">
    <cofactor evidence="1">
        <name>Mg(2+)</name>
        <dbReference type="ChEBI" id="CHEBI:18420"/>
    </cofactor>
</comment>
<comment type="subunit">
    <text evidence="1">Homotetramer.</text>
</comment>
<comment type="subcellular location">
    <subcellularLocation>
        <location evidence="1">Cytoplasm</location>
    </subcellularLocation>
</comment>
<comment type="similarity">
    <text evidence="1">Belongs to the NDK family.</text>
</comment>
<keyword id="KW-0067">ATP-binding</keyword>
<keyword id="KW-0963">Cytoplasm</keyword>
<keyword id="KW-0418">Kinase</keyword>
<keyword id="KW-0460">Magnesium</keyword>
<keyword id="KW-0479">Metal-binding</keyword>
<keyword id="KW-0546">Nucleotide metabolism</keyword>
<keyword id="KW-0547">Nucleotide-binding</keyword>
<keyword id="KW-0597">Phosphoprotein</keyword>
<keyword id="KW-0808">Transferase</keyword>
<sequence length="148" mass="16601">MEKTFLMVKPDGVQRAFIGEIVARFEKKGFQLVGAKLMQVTPEIAGQHYAEHTEKPFFGELVDFITSGPVFAMVWQGEGVVDTARNMMGKTRPHEAAPGTIRGDFGVTVAKNIIHGSDSLESAEREIGIFFKEEELVDYSKLMNEWIY</sequence>
<name>NDK_BACHK</name>
<organism>
    <name type="scientific">Bacillus thuringiensis subsp. konkukian (strain 97-27)</name>
    <dbReference type="NCBI Taxonomy" id="281309"/>
    <lineage>
        <taxon>Bacteria</taxon>
        <taxon>Bacillati</taxon>
        <taxon>Bacillota</taxon>
        <taxon>Bacilli</taxon>
        <taxon>Bacillales</taxon>
        <taxon>Bacillaceae</taxon>
        <taxon>Bacillus</taxon>
        <taxon>Bacillus cereus group</taxon>
    </lineage>
</organism>
<reference key="1">
    <citation type="journal article" date="2006" name="J. Bacteriol.">
        <title>Pathogenomic sequence analysis of Bacillus cereus and Bacillus thuringiensis isolates closely related to Bacillus anthracis.</title>
        <authorList>
            <person name="Han C.S."/>
            <person name="Xie G."/>
            <person name="Challacombe J.F."/>
            <person name="Altherr M.R."/>
            <person name="Bhotika S.S."/>
            <person name="Bruce D."/>
            <person name="Campbell C.S."/>
            <person name="Campbell M.L."/>
            <person name="Chen J."/>
            <person name="Chertkov O."/>
            <person name="Cleland C."/>
            <person name="Dimitrijevic M."/>
            <person name="Doggett N.A."/>
            <person name="Fawcett J.J."/>
            <person name="Glavina T."/>
            <person name="Goodwin L.A."/>
            <person name="Hill K.K."/>
            <person name="Hitchcock P."/>
            <person name="Jackson P.J."/>
            <person name="Keim P."/>
            <person name="Kewalramani A.R."/>
            <person name="Longmire J."/>
            <person name="Lucas S."/>
            <person name="Malfatti S."/>
            <person name="McMurry K."/>
            <person name="Meincke L.J."/>
            <person name="Misra M."/>
            <person name="Moseman B.L."/>
            <person name="Mundt M."/>
            <person name="Munk A.C."/>
            <person name="Okinaka R.T."/>
            <person name="Parson-Quintana B."/>
            <person name="Reilly L.P."/>
            <person name="Richardson P."/>
            <person name="Robinson D.L."/>
            <person name="Rubin E."/>
            <person name="Saunders E."/>
            <person name="Tapia R."/>
            <person name="Tesmer J.G."/>
            <person name="Thayer N."/>
            <person name="Thompson L.S."/>
            <person name="Tice H."/>
            <person name="Ticknor L.O."/>
            <person name="Wills P.L."/>
            <person name="Brettin T.S."/>
            <person name="Gilna P."/>
        </authorList>
    </citation>
    <scope>NUCLEOTIDE SEQUENCE [LARGE SCALE GENOMIC DNA]</scope>
    <source>
        <strain>97-27</strain>
    </source>
</reference>
<evidence type="ECO:0000255" key="1">
    <source>
        <dbReference type="HAMAP-Rule" id="MF_00451"/>
    </source>
</evidence>
<proteinExistence type="inferred from homology"/>